<reference key="1">
    <citation type="journal article" date="2005" name="Nucleic Acids Res.">
        <title>Genome dynamics and diversity of Shigella species, the etiologic agents of bacillary dysentery.</title>
        <authorList>
            <person name="Yang F."/>
            <person name="Yang J."/>
            <person name="Zhang X."/>
            <person name="Chen L."/>
            <person name="Jiang Y."/>
            <person name="Yan Y."/>
            <person name="Tang X."/>
            <person name="Wang J."/>
            <person name="Xiong Z."/>
            <person name="Dong J."/>
            <person name="Xue Y."/>
            <person name="Zhu Y."/>
            <person name="Xu X."/>
            <person name="Sun L."/>
            <person name="Chen S."/>
            <person name="Nie H."/>
            <person name="Peng J."/>
            <person name="Xu J."/>
            <person name="Wang Y."/>
            <person name="Yuan Z."/>
            <person name="Wen Y."/>
            <person name="Yao Z."/>
            <person name="Shen Y."/>
            <person name="Qiang B."/>
            <person name="Hou Y."/>
            <person name="Yu J."/>
            <person name="Jin Q."/>
        </authorList>
    </citation>
    <scope>NUCLEOTIDE SEQUENCE [LARGE SCALE GENOMIC DNA]</scope>
    <source>
        <strain>Ss046</strain>
    </source>
</reference>
<proteinExistence type="inferred from homology"/>
<evidence type="ECO:0000255" key="1">
    <source>
        <dbReference type="HAMAP-Rule" id="MF_00116"/>
    </source>
</evidence>
<protein>
    <recommendedName>
        <fullName evidence="1">Deoxyuridine 5'-triphosphate nucleotidohydrolase</fullName>
        <shortName evidence="1">dUTPase</shortName>
        <ecNumber evidence="1">3.6.1.23</ecNumber>
    </recommendedName>
    <alternativeName>
        <fullName evidence="1">dUTP pyrophosphatase</fullName>
    </alternativeName>
</protein>
<comment type="function">
    <text evidence="1">This enzyme is involved in nucleotide metabolism: it produces dUMP, the immediate precursor of thymidine nucleotides and it decreases the intracellular concentration of dUTP so that uracil cannot be incorporated into DNA.</text>
</comment>
<comment type="catalytic activity">
    <reaction evidence="1">
        <text>dUTP + H2O = dUMP + diphosphate + H(+)</text>
        <dbReference type="Rhea" id="RHEA:10248"/>
        <dbReference type="ChEBI" id="CHEBI:15377"/>
        <dbReference type="ChEBI" id="CHEBI:15378"/>
        <dbReference type="ChEBI" id="CHEBI:33019"/>
        <dbReference type="ChEBI" id="CHEBI:61555"/>
        <dbReference type="ChEBI" id="CHEBI:246422"/>
        <dbReference type="EC" id="3.6.1.23"/>
    </reaction>
</comment>
<comment type="cofactor">
    <cofactor evidence="1">
        <name>Mg(2+)</name>
        <dbReference type="ChEBI" id="CHEBI:18420"/>
    </cofactor>
</comment>
<comment type="pathway">
    <text evidence="1">Pyrimidine metabolism; dUMP biosynthesis; dUMP from dCTP (dUTP route): step 2/2.</text>
</comment>
<comment type="similarity">
    <text evidence="1">Belongs to the dUTPase family.</text>
</comment>
<feature type="chain" id="PRO_0000231430" description="Deoxyuridine 5'-triphosphate nucleotidohydrolase">
    <location>
        <begin position="1"/>
        <end position="151"/>
    </location>
</feature>
<feature type="binding site" evidence="1">
    <location>
        <begin position="70"/>
        <end position="72"/>
    </location>
    <ligand>
        <name>substrate</name>
    </ligand>
</feature>
<feature type="binding site" evidence="1">
    <location>
        <position position="83"/>
    </location>
    <ligand>
        <name>substrate</name>
    </ligand>
</feature>
<feature type="binding site" evidence="1">
    <location>
        <begin position="87"/>
        <end position="89"/>
    </location>
    <ligand>
        <name>substrate</name>
    </ligand>
</feature>
<feature type="binding site" evidence="1">
    <location>
        <position position="97"/>
    </location>
    <ligand>
        <name>substrate</name>
    </ligand>
</feature>
<accession>Q3YW02</accession>
<dbReference type="EC" id="3.6.1.23" evidence="1"/>
<dbReference type="EMBL" id="CP000038">
    <property type="protein sequence ID" value="AAZ90310.1"/>
    <property type="molecule type" value="Genomic_DNA"/>
</dbReference>
<dbReference type="SMR" id="Q3YW02"/>
<dbReference type="KEGG" id="ssn:SSON_3766"/>
<dbReference type="HOGENOM" id="CLU_068508_1_1_6"/>
<dbReference type="UniPathway" id="UPA00610">
    <property type="reaction ID" value="UER00666"/>
</dbReference>
<dbReference type="Proteomes" id="UP000002529">
    <property type="component" value="Chromosome"/>
</dbReference>
<dbReference type="GO" id="GO:0004170">
    <property type="term" value="F:dUTP diphosphatase activity"/>
    <property type="evidence" value="ECO:0007669"/>
    <property type="project" value="UniProtKB-UniRule"/>
</dbReference>
<dbReference type="GO" id="GO:0000287">
    <property type="term" value="F:magnesium ion binding"/>
    <property type="evidence" value="ECO:0007669"/>
    <property type="project" value="UniProtKB-UniRule"/>
</dbReference>
<dbReference type="GO" id="GO:0006226">
    <property type="term" value="P:dUMP biosynthetic process"/>
    <property type="evidence" value="ECO:0007669"/>
    <property type="project" value="UniProtKB-UniRule"/>
</dbReference>
<dbReference type="GO" id="GO:0046081">
    <property type="term" value="P:dUTP catabolic process"/>
    <property type="evidence" value="ECO:0007669"/>
    <property type="project" value="InterPro"/>
</dbReference>
<dbReference type="CDD" id="cd07557">
    <property type="entry name" value="trimeric_dUTPase"/>
    <property type="match status" value="1"/>
</dbReference>
<dbReference type="FunFam" id="2.70.40.10:FF:000002">
    <property type="entry name" value="dUTP diphosphatase"/>
    <property type="match status" value="1"/>
</dbReference>
<dbReference type="Gene3D" id="2.70.40.10">
    <property type="match status" value="1"/>
</dbReference>
<dbReference type="HAMAP" id="MF_00116">
    <property type="entry name" value="dUTPase_bact"/>
    <property type="match status" value="1"/>
</dbReference>
<dbReference type="InterPro" id="IPR008181">
    <property type="entry name" value="dUTPase"/>
</dbReference>
<dbReference type="InterPro" id="IPR029054">
    <property type="entry name" value="dUTPase-like"/>
</dbReference>
<dbReference type="InterPro" id="IPR036157">
    <property type="entry name" value="dUTPase-like_sf"/>
</dbReference>
<dbReference type="InterPro" id="IPR033704">
    <property type="entry name" value="dUTPase_trimeric"/>
</dbReference>
<dbReference type="NCBIfam" id="TIGR00576">
    <property type="entry name" value="dut"/>
    <property type="match status" value="1"/>
</dbReference>
<dbReference type="NCBIfam" id="NF001862">
    <property type="entry name" value="PRK00601.1"/>
    <property type="match status" value="1"/>
</dbReference>
<dbReference type="PANTHER" id="PTHR11241">
    <property type="entry name" value="DEOXYURIDINE 5'-TRIPHOSPHATE NUCLEOTIDOHYDROLASE"/>
    <property type="match status" value="1"/>
</dbReference>
<dbReference type="PANTHER" id="PTHR11241:SF0">
    <property type="entry name" value="DEOXYURIDINE 5'-TRIPHOSPHATE NUCLEOTIDOHYDROLASE"/>
    <property type="match status" value="1"/>
</dbReference>
<dbReference type="Pfam" id="PF00692">
    <property type="entry name" value="dUTPase"/>
    <property type="match status" value="1"/>
</dbReference>
<dbReference type="SUPFAM" id="SSF51283">
    <property type="entry name" value="dUTPase-like"/>
    <property type="match status" value="1"/>
</dbReference>
<organism>
    <name type="scientific">Shigella sonnei (strain Ss046)</name>
    <dbReference type="NCBI Taxonomy" id="300269"/>
    <lineage>
        <taxon>Bacteria</taxon>
        <taxon>Pseudomonadati</taxon>
        <taxon>Pseudomonadota</taxon>
        <taxon>Gammaproteobacteria</taxon>
        <taxon>Enterobacterales</taxon>
        <taxon>Enterobacteriaceae</taxon>
        <taxon>Shigella</taxon>
    </lineage>
</organism>
<name>DUT_SHISS</name>
<gene>
    <name evidence="1" type="primary">dut</name>
    <name type="ordered locus">SSON_3766</name>
</gene>
<keyword id="KW-0378">Hydrolase</keyword>
<keyword id="KW-0460">Magnesium</keyword>
<keyword id="KW-0479">Metal-binding</keyword>
<keyword id="KW-0546">Nucleotide metabolism</keyword>
<keyword id="KW-1185">Reference proteome</keyword>
<sequence>MKKIDVKILDPRVGKEFPLPTYATSGSAGLDLRACLDDAVELAPGDSTLVPTGLAIHIADPSLAAMMLPRSGLGHKHGIVLGNLVGLIDSDYQGQLMISVWNRGQDSFTIQPGERIAQMIFVPVVQAEFNLVEDFDATDRGEGGFGHSGRQ</sequence>